<proteinExistence type="inferred from homology"/>
<reference key="1">
    <citation type="journal article" date="2005" name="Nature">
        <title>The genome of the social amoeba Dictyostelium discoideum.</title>
        <authorList>
            <person name="Eichinger L."/>
            <person name="Pachebat J.A."/>
            <person name="Gloeckner G."/>
            <person name="Rajandream M.A."/>
            <person name="Sucgang R."/>
            <person name="Berriman M."/>
            <person name="Song J."/>
            <person name="Olsen R."/>
            <person name="Szafranski K."/>
            <person name="Xu Q."/>
            <person name="Tunggal B."/>
            <person name="Kummerfeld S."/>
            <person name="Madera M."/>
            <person name="Konfortov B.A."/>
            <person name="Rivero F."/>
            <person name="Bankier A.T."/>
            <person name="Lehmann R."/>
            <person name="Hamlin N."/>
            <person name="Davies R."/>
            <person name="Gaudet P."/>
            <person name="Fey P."/>
            <person name="Pilcher K."/>
            <person name="Chen G."/>
            <person name="Saunders D."/>
            <person name="Sodergren E.J."/>
            <person name="Davis P."/>
            <person name="Kerhornou A."/>
            <person name="Nie X."/>
            <person name="Hall N."/>
            <person name="Anjard C."/>
            <person name="Hemphill L."/>
            <person name="Bason N."/>
            <person name="Farbrother P."/>
            <person name="Desany B."/>
            <person name="Just E."/>
            <person name="Morio T."/>
            <person name="Rost R."/>
            <person name="Churcher C.M."/>
            <person name="Cooper J."/>
            <person name="Haydock S."/>
            <person name="van Driessche N."/>
            <person name="Cronin A."/>
            <person name="Goodhead I."/>
            <person name="Muzny D.M."/>
            <person name="Mourier T."/>
            <person name="Pain A."/>
            <person name="Lu M."/>
            <person name="Harper D."/>
            <person name="Lindsay R."/>
            <person name="Hauser H."/>
            <person name="James K.D."/>
            <person name="Quiles M."/>
            <person name="Madan Babu M."/>
            <person name="Saito T."/>
            <person name="Buchrieser C."/>
            <person name="Wardroper A."/>
            <person name="Felder M."/>
            <person name="Thangavelu M."/>
            <person name="Johnson D."/>
            <person name="Knights A."/>
            <person name="Loulseged H."/>
            <person name="Mungall K.L."/>
            <person name="Oliver K."/>
            <person name="Price C."/>
            <person name="Quail M.A."/>
            <person name="Urushihara H."/>
            <person name="Hernandez J."/>
            <person name="Rabbinowitsch E."/>
            <person name="Steffen D."/>
            <person name="Sanders M."/>
            <person name="Ma J."/>
            <person name="Kohara Y."/>
            <person name="Sharp S."/>
            <person name="Simmonds M.N."/>
            <person name="Spiegler S."/>
            <person name="Tivey A."/>
            <person name="Sugano S."/>
            <person name="White B."/>
            <person name="Walker D."/>
            <person name="Woodward J.R."/>
            <person name="Winckler T."/>
            <person name="Tanaka Y."/>
            <person name="Shaulsky G."/>
            <person name="Schleicher M."/>
            <person name="Weinstock G.M."/>
            <person name="Rosenthal A."/>
            <person name="Cox E.C."/>
            <person name="Chisholm R.L."/>
            <person name="Gibbs R.A."/>
            <person name="Loomis W.F."/>
            <person name="Platzer M."/>
            <person name="Kay R.R."/>
            <person name="Williams J.G."/>
            <person name="Dear P.H."/>
            <person name="Noegel A.A."/>
            <person name="Barrell B.G."/>
            <person name="Kuspa A."/>
        </authorList>
    </citation>
    <scope>NUCLEOTIDE SEQUENCE [LARGE SCALE GENOMIC DNA]</scope>
    <source>
        <strain>AX4</strain>
    </source>
</reference>
<accession>Q54Z01</accession>
<sequence length="270" mass="30454">MSSTKSDFEIIREYIIGDGKDISVGKAPEGNVRLEITHSVLTGESLGTNNFKNFSLDLKIKDFKEKLYRFVGTEPKYMELILRDENKVNDICKIDDDDDKTLGSYEPKDGMNVHIIDKDPNNFVSELQDISKAPKPVISEEDYNKREGTYKKWKEENQLKKENDTTATTVTATTTTTNNATDTEIEIKVGDRCKVISDDPTNYDERLGKVQYVGTVEFSSGVWIGVELDLPLGKNDGSVKGKQYFQCSPKYGCFAKPKNVLVGDYPEEEI</sequence>
<keyword id="KW-0143">Chaperone</keyword>
<keyword id="KW-0963">Cytoplasm</keyword>
<keyword id="KW-0206">Cytoskeleton</keyword>
<keyword id="KW-0493">Microtubule</keyword>
<keyword id="KW-1185">Reference proteome</keyword>
<dbReference type="EMBL" id="AAFI02000023">
    <property type="protein sequence ID" value="EAL68164.1"/>
    <property type="molecule type" value="Genomic_DNA"/>
</dbReference>
<dbReference type="RefSeq" id="XP_642051.1">
    <property type="nucleotide sequence ID" value="XM_636959.1"/>
</dbReference>
<dbReference type="SMR" id="Q54Z01"/>
<dbReference type="FunCoup" id="Q54Z01">
    <property type="interactions" value="909"/>
</dbReference>
<dbReference type="STRING" id="44689.Q54Z01"/>
<dbReference type="PaxDb" id="44689-DDB0266632"/>
<dbReference type="EnsemblProtists" id="EAL68164">
    <property type="protein sequence ID" value="EAL68164"/>
    <property type="gene ID" value="DDB_G0277983"/>
</dbReference>
<dbReference type="GeneID" id="8621263"/>
<dbReference type="KEGG" id="ddi:DDB_G0277983"/>
<dbReference type="dictyBase" id="DDB_G0277983">
    <property type="gene designation" value="tbcB"/>
</dbReference>
<dbReference type="VEuPathDB" id="AmoebaDB:DDB_G0277983"/>
<dbReference type="eggNOG" id="KOG3206">
    <property type="taxonomic scope" value="Eukaryota"/>
</dbReference>
<dbReference type="HOGENOM" id="CLU_067577_2_0_1"/>
<dbReference type="InParanoid" id="Q54Z01"/>
<dbReference type="OMA" id="DQYEQRT"/>
<dbReference type="PhylomeDB" id="Q54Z01"/>
<dbReference type="PRO" id="PR:Q54Z01"/>
<dbReference type="Proteomes" id="UP000002195">
    <property type="component" value="Chromosome 3"/>
</dbReference>
<dbReference type="GO" id="GO:0005737">
    <property type="term" value="C:cytoplasm"/>
    <property type="evidence" value="ECO:0000318"/>
    <property type="project" value="GO_Central"/>
</dbReference>
<dbReference type="GO" id="GO:0035371">
    <property type="term" value="C:microtubule plus-end"/>
    <property type="evidence" value="ECO:0000318"/>
    <property type="project" value="GO_Central"/>
</dbReference>
<dbReference type="GO" id="GO:0005634">
    <property type="term" value="C:nucleus"/>
    <property type="evidence" value="ECO:0000318"/>
    <property type="project" value="GO_Central"/>
</dbReference>
<dbReference type="GO" id="GO:0043014">
    <property type="term" value="F:alpha-tubulin binding"/>
    <property type="evidence" value="ECO:0007669"/>
    <property type="project" value="InterPro"/>
</dbReference>
<dbReference type="GO" id="GO:0051010">
    <property type="term" value="F:microtubule plus-end binding"/>
    <property type="evidence" value="ECO:0000318"/>
    <property type="project" value="GO_Central"/>
</dbReference>
<dbReference type="GO" id="GO:0031122">
    <property type="term" value="P:cytoplasmic microtubule organization"/>
    <property type="evidence" value="ECO:0000318"/>
    <property type="project" value="GO_Central"/>
</dbReference>
<dbReference type="GO" id="GO:0007023">
    <property type="term" value="P:post-chaperonin tubulin folding pathway"/>
    <property type="evidence" value="ECO:0007669"/>
    <property type="project" value="InterPro"/>
</dbReference>
<dbReference type="GO" id="GO:0007021">
    <property type="term" value="P:tubulin complex assembly"/>
    <property type="evidence" value="ECO:0007669"/>
    <property type="project" value="InterPro"/>
</dbReference>
<dbReference type="CDD" id="cd01789">
    <property type="entry name" value="Ubl_TBCB"/>
    <property type="match status" value="1"/>
</dbReference>
<dbReference type="FunFam" id="2.30.30.190:FF:000013">
    <property type="entry name" value="Tubulin-folding cofactor B"/>
    <property type="match status" value="1"/>
</dbReference>
<dbReference type="Gene3D" id="2.30.30.190">
    <property type="entry name" value="CAP Gly-rich-like domain"/>
    <property type="match status" value="1"/>
</dbReference>
<dbReference type="Gene3D" id="3.10.20.90">
    <property type="entry name" value="Phosphatidylinositol 3-kinase Catalytic Subunit, Chain A, domain 1"/>
    <property type="match status" value="1"/>
</dbReference>
<dbReference type="InterPro" id="IPR036859">
    <property type="entry name" value="CAP-Gly_dom_sf"/>
</dbReference>
<dbReference type="InterPro" id="IPR000938">
    <property type="entry name" value="CAP-Gly_domain"/>
</dbReference>
<dbReference type="InterPro" id="IPR045172">
    <property type="entry name" value="TBCB_Ubl"/>
</dbReference>
<dbReference type="InterPro" id="IPR000626">
    <property type="entry name" value="Ubiquitin-like_dom"/>
</dbReference>
<dbReference type="InterPro" id="IPR029071">
    <property type="entry name" value="Ubiquitin-like_domsf"/>
</dbReference>
<dbReference type="PANTHER" id="PTHR18916">
    <property type="entry name" value="DYNACTIN 1-RELATED MICROTUBULE-BINDING"/>
    <property type="match status" value="1"/>
</dbReference>
<dbReference type="PANTHER" id="PTHR18916:SF85">
    <property type="entry name" value="TUBULIN-FOLDING COFACTOR B"/>
    <property type="match status" value="1"/>
</dbReference>
<dbReference type="Pfam" id="PF01302">
    <property type="entry name" value="CAP_GLY"/>
    <property type="match status" value="1"/>
</dbReference>
<dbReference type="Pfam" id="PF14560">
    <property type="entry name" value="Ubiquitin_2"/>
    <property type="match status" value="1"/>
</dbReference>
<dbReference type="SMART" id="SM01052">
    <property type="entry name" value="CAP_GLY"/>
    <property type="match status" value="1"/>
</dbReference>
<dbReference type="SUPFAM" id="SSF74924">
    <property type="entry name" value="Cap-Gly domain"/>
    <property type="match status" value="1"/>
</dbReference>
<dbReference type="SUPFAM" id="SSF54236">
    <property type="entry name" value="Ubiquitin-like"/>
    <property type="match status" value="1"/>
</dbReference>
<dbReference type="PROSITE" id="PS00845">
    <property type="entry name" value="CAP_GLY_1"/>
    <property type="match status" value="1"/>
</dbReference>
<dbReference type="PROSITE" id="PS50245">
    <property type="entry name" value="CAP_GLY_2"/>
    <property type="match status" value="1"/>
</dbReference>
<comment type="function">
    <text evidence="1">Binds to alpha-tubulin folding intermediates after their interaction with cytosolic chaperonin in the pathway leading from newly synthesized tubulin to properly folded heterodimer.</text>
</comment>
<comment type="subunit">
    <text evidence="1">Supercomplex made of cofactors A to E. Cofactors A and D function by capturing and stabilizing tubulin in a quasi-native conformation. Cofactor E binds to the cofactor D-tubulin complex; interaction with cofactor C then causes the release of tubulin polypeptides that are committed to the native state (By similarity).</text>
</comment>
<comment type="subcellular location">
    <subcellularLocation>
        <location evidence="1">Cytoplasm</location>
    </subcellularLocation>
    <subcellularLocation>
        <location evidence="1">Cytoplasm</location>
        <location evidence="1">Cytoskeleton</location>
    </subcellularLocation>
</comment>
<comment type="similarity">
    <text evidence="3">Belongs to the TBCB family.</text>
</comment>
<protein>
    <recommendedName>
        <fullName>Tubulin-specific chaperone B</fullName>
    </recommendedName>
    <alternativeName>
        <fullName>Tubulin-folding cofactor B</fullName>
    </alternativeName>
</protein>
<organism>
    <name type="scientific">Dictyostelium discoideum</name>
    <name type="common">Social amoeba</name>
    <dbReference type="NCBI Taxonomy" id="44689"/>
    <lineage>
        <taxon>Eukaryota</taxon>
        <taxon>Amoebozoa</taxon>
        <taxon>Evosea</taxon>
        <taxon>Eumycetozoa</taxon>
        <taxon>Dictyostelia</taxon>
        <taxon>Dictyosteliales</taxon>
        <taxon>Dictyosteliaceae</taxon>
        <taxon>Dictyostelium</taxon>
    </lineage>
</organism>
<evidence type="ECO:0000250" key="1"/>
<evidence type="ECO:0000255" key="2">
    <source>
        <dbReference type="PROSITE-ProRule" id="PRU00045"/>
    </source>
</evidence>
<evidence type="ECO:0000305" key="3"/>
<gene>
    <name type="primary">tbcb</name>
    <name type="ORF">DDB_G0277983</name>
</gene>
<feature type="chain" id="PRO_0000330825" description="Tubulin-specific chaperone B">
    <location>
        <begin position="1"/>
        <end position="270"/>
    </location>
</feature>
<feature type="domain" description="CAP-Gly" evidence="2">
    <location>
        <begin position="214"/>
        <end position="256"/>
    </location>
</feature>
<name>TBCB_DICDI</name>